<comment type="function">
    <text>PLA2 catalyzes the calcium-dependent hydrolysis of the 2-acyl groups in 3-sn-phosphoglycerides.</text>
</comment>
<comment type="catalytic activity">
    <reaction evidence="3 4">
        <text>a 1,2-diacyl-sn-glycero-3-phosphocholine + H2O = a 1-acyl-sn-glycero-3-phosphocholine + a fatty acid + H(+)</text>
        <dbReference type="Rhea" id="RHEA:15801"/>
        <dbReference type="ChEBI" id="CHEBI:15377"/>
        <dbReference type="ChEBI" id="CHEBI:15378"/>
        <dbReference type="ChEBI" id="CHEBI:28868"/>
        <dbReference type="ChEBI" id="CHEBI:57643"/>
        <dbReference type="ChEBI" id="CHEBI:58168"/>
        <dbReference type="EC" id="3.1.1.4"/>
    </reaction>
</comment>
<comment type="cofactor">
    <cofactor evidence="2">
        <name>Ca(2+)</name>
        <dbReference type="ChEBI" id="CHEBI:29108"/>
    </cofactor>
    <text evidence="2">Binds 1 Ca(2+) ion per subunit.</text>
</comment>
<comment type="subunit">
    <text evidence="6">Homodimer.</text>
</comment>
<comment type="subcellular location">
    <subcellularLocation>
        <location>Secreted</location>
    </subcellularLocation>
</comment>
<comment type="tissue specificity">
    <text>Expressed by the venom gland.</text>
</comment>
<comment type="mass spectrometry">
    <text>Average mass.</text>
</comment>
<comment type="similarity">
    <text evidence="8">Belongs to the phospholipase A2 family. Group II subfamily. D49 sub-subfamily.</text>
</comment>
<dbReference type="EC" id="3.1.1.4"/>
<dbReference type="EMBL" id="AF269131">
    <property type="protein sequence ID" value="AAL36974.1"/>
    <property type="molecule type" value="mRNA"/>
</dbReference>
<dbReference type="PIR" id="A00764">
    <property type="entry name" value="PSRSAW"/>
</dbReference>
<dbReference type="PDB" id="1PP2">
    <property type="method" value="X-ray"/>
    <property type="resolution" value="2.50 A"/>
    <property type="chains" value="L/R=17-138"/>
</dbReference>
<dbReference type="PDBsum" id="1PP2"/>
<dbReference type="SMR" id="P00624"/>
<dbReference type="EvolutionaryTrace" id="P00624"/>
<dbReference type="GO" id="GO:0005576">
    <property type="term" value="C:extracellular region"/>
    <property type="evidence" value="ECO:0007669"/>
    <property type="project" value="UniProtKB-SubCell"/>
</dbReference>
<dbReference type="GO" id="GO:0005509">
    <property type="term" value="F:calcium ion binding"/>
    <property type="evidence" value="ECO:0007669"/>
    <property type="project" value="InterPro"/>
</dbReference>
<dbReference type="GO" id="GO:0047498">
    <property type="term" value="F:calcium-dependent phospholipase A2 activity"/>
    <property type="evidence" value="ECO:0007669"/>
    <property type="project" value="TreeGrafter"/>
</dbReference>
<dbReference type="GO" id="GO:0005543">
    <property type="term" value="F:phospholipid binding"/>
    <property type="evidence" value="ECO:0007669"/>
    <property type="project" value="TreeGrafter"/>
</dbReference>
<dbReference type="GO" id="GO:0090729">
    <property type="term" value="F:toxin activity"/>
    <property type="evidence" value="ECO:0007669"/>
    <property type="project" value="UniProtKB-KW"/>
</dbReference>
<dbReference type="GO" id="GO:0050482">
    <property type="term" value="P:arachidonate secretion"/>
    <property type="evidence" value="ECO:0007669"/>
    <property type="project" value="InterPro"/>
</dbReference>
<dbReference type="GO" id="GO:0016042">
    <property type="term" value="P:lipid catabolic process"/>
    <property type="evidence" value="ECO:0007669"/>
    <property type="project" value="UniProtKB-KW"/>
</dbReference>
<dbReference type="GO" id="GO:0042130">
    <property type="term" value="P:negative regulation of T cell proliferation"/>
    <property type="evidence" value="ECO:0007669"/>
    <property type="project" value="TreeGrafter"/>
</dbReference>
<dbReference type="GO" id="GO:0006644">
    <property type="term" value="P:phospholipid metabolic process"/>
    <property type="evidence" value="ECO:0007669"/>
    <property type="project" value="InterPro"/>
</dbReference>
<dbReference type="CDD" id="cd00125">
    <property type="entry name" value="PLA2c"/>
    <property type="match status" value="1"/>
</dbReference>
<dbReference type="FunFam" id="1.20.90.10:FF:000001">
    <property type="entry name" value="Basic phospholipase A2 homolog"/>
    <property type="match status" value="1"/>
</dbReference>
<dbReference type="Gene3D" id="1.20.90.10">
    <property type="entry name" value="Phospholipase A2 domain"/>
    <property type="match status" value="1"/>
</dbReference>
<dbReference type="InterPro" id="IPR001211">
    <property type="entry name" value="PLipase_A2"/>
</dbReference>
<dbReference type="InterPro" id="IPR033112">
    <property type="entry name" value="PLipase_A2_Asp_AS"/>
</dbReference>
<dbReference type="InterPro" id="IPR016090">
    <property type="entry name" value="PLipase_A2_dom"/>
</dbReference>
<dbReference type="InterPro" id="IPR036444">
    <property type="entry name" value="PLipase_A2_dom_sf"/>
</dbReference>
<dbReference type="InterPro" id="IPR033113">
    <property type="entry name" value="PLipase_A2_His_AS"/>
</dbReference>
<dbReference type="PANTHER" id="PTHR11716">
    <property type="entry name" value="PHOSPHOLIPASE A2 FAMILY MEMBER"/>
    <property type="match status" value="1"/>
</dbReference>
<dbReference type="PANTHER" id="PTHR11716:SF9">
    <property type="entry name" value="PHOSPHOLIPASE A2, MEMBRANE ASSOCIATED"/>
    <property type="match status" value="1"/>
</dbReference>
<dbReference type="Pfam" id="PF00068">
    <property type="entry name" value="Phospholip_A2_1"/>
    <property type="match status" value="1"/>
</dbReference>
<dbReference type="PRINTS" id="PR00389">
    <property type="entry name" value="PHPHLIPASEA2"/>
</dbReference>
<dbReference type="SMART" id="SM00085">
    <property type="entry name" value="PA2c"/>
    <property type="match status" value="1"/>
</dbReference>
<dbReference type="SUPFAM" id="SSF48619">
    <property type="entry name" value="Phospholipase A2, PLA2"/>
    <property type="match status" value="1"/>
</dbReference>
<dbReference type="PROSITE" id="PS00119">
    <property type="entry name" value="PA2_ASP"/>
    <property type="match status" value="1"/>
</dbReference>
<dbReference type="PROSITE" id="PS00118">
    <property type="entry name" value="PA2_HIS"/>
    <property type="match status" value="1"/>
</dbReference>
<sequence>MRTLWIVAVLLLGVEGSLVQFETLIMKIAGRSGLLWYSAYGCYCGWGGHGLPQDATDRCCFVHDCCYGKATDCNPKTVSYTYSEENGEIICGGDDPCGTQICECDKAAAICFRDNIPSYDNKYWLFPPKNCREEPEPC</sequence>
<evidence type="ECO:0000250" key="1">
    <source>
        <dbReference type="UniProtKB" id="O42191"/>
    </source>
</evidence>
<evidence type="ECO:0000250" key="2">
    <source>
        <dbReference type="UniProtKB" id="Q8AXY1"/>
    </source>
</evidence>
<evidence type="ECO:0000255" key="3">
    <source>
        <dbReference type="PROSITE-ProRule" id="PRU10035"/>
    </source>
</evidence>
<evidence type="ECO:0000255" key="4">
    <source>
        <dbReference type="PROSITE-ProRule" id="PRU10036"/>
    </source>
</evidence>
<evidence type="ECO:0000269" key="5">
    <source>
    </source>
</evidence>
<evidence type="ECO:0000269" key="6">
    <source>
    </source>
</evidence>
<evidence type="ECO:0000269" key="7">
    <source>
    </source>
</evidence>
<evidence type="ECO:0000305" key="8"/>
<evidence type="ECO:0000305" key="9">
    <source>
    </source>
</evidence>
<evidence type="ECO:0007744" key="10">
    <source>
        <dbReference type="PDB" id="1PP2"/>
    </source>
</evidence>
<evidence type="ECO:0007829" key="11">
    <source>
        <dbReference type="PDB" id="1PP2"/>
    </source>
</evidence>
<organism>
    <name type="scientific">Crotalus atrox</name>
    <name type="common">Western diamondback rattlesnake</name>
    <dbReference type="NCBI Taxonomy" id="8730"/>
    <lineage>
        <taxon>Eukaryota</taxon>
        <taxon>Metazoa</taxon>
        <taxon>Chordata</taxon>
        <taxon>Craniata</taxon>
        <taxon>Vertebrata</taxon>
        <taxon>Euteleostomi</taxon>
        <taxon>Lepidosauria</taxon>
        <taxon>Squamata</taxon>
        <taxon>Bifurcata</taxon>
        <taxon>Unidentata</taxon>
        <taxon>Episquamata</taxon>
        <taxon>Toxicofera</taxon>
        <taxon>Serpentes</taxon>
        <taxon>Colubroidea</taxon>
        <taxon>Viperidae</taxon>
        <taxon>Crotalinae</taxon>
        <taxon>Crotalus</taxon>
    </lineage>
</organism>
<proteinExistence type="evidence at protein level"/>
<feature type="signal peptide" evidence="5 7">
    <location>
        <begin position="1"/>
        <end position="16"/>
    </location>
</feature>
<feature type="chain" id="PRO_0000022851" description="Acidic phospholipase A2">
    <location>
        <begin position="17"/>
        <end position="138"/>
    </location>
</feature>
<feature type="active site" evidence="9">
    <location>
        <position position="63"/>
    </location>
</feature>
<feature type="active site" evidence="9">
    <location>
        <position position="105"/>
    </location>
</feature>
<feature type="binding site" evidence="1">
    <location>
        <position position="43"/>
    </location>
    <ligand>
        <name>Ca(2+)</name>
        <dbReference type="ChEBI" id="CHEBI:29108"/>
    </ligand>
</feature>
<feature type="binding site" evidence="1">
    <location>
        <position position="45"/>
    </location>
    <ligand>
        <name>Ca(2+)</name>
        <dbReference type="ChEBI" id="CHEBI:29108"/>
    </ligand>
</feature>
<feature type="binding site" evidence="1">
    <location>
        <position position="47"/>
    </location>
    <ligand>
        <name>Ca(2+)</name>
        <dbReference type="ChEBI" id="CHEBI:29108"/>
    </ligand>
</feature>
<feature type="binding site" evidence="1">
    <location>
        <position position="64"/>
    </location>
    <ligand>
        <name>Ca(2+)</name>
        <dbReference type="ChEBI" id="CHEBI:29108"/>
    </ligand>
</feature>
<feature type="disulfide bond" evidence="6 10">
    <location>
        <begin position="42"/>
        <end position="131"/>
    </location>
</feature>
<feature type="disulfide bond" evidence="6 10">
    <location>
        <begin position="44"/>
        <end position="60"/>
    </location>
</feature>
<feature type="disulfide bond" evidence="6 10">
    <location>
        <begin position="59"/>
        <end position="111"/>
    </location>
</feature>
<feature type="disulfide bond" evidence="6 10">
    <location>
        <begin position="65"/>
        <end position="138"/>
    </location>
</feature>
<feature type="disulfide bond" evidence="6 10">
    <location>
        <begin position="66"/>
        <end position="104"/>
    </location>
</feature>
<feature type="disulfide bond" evidence="6 10">
    <location>
        <begin position="73"/>
        <end position="97"/>
    </location>
</feature>
<feature type="disulfide bond" evidence="6 10">
    <location>
        <begin position="91"/>
        <end position="102"/>
    </location>
</feature>
<feature type="sequence conflict" description="In Ref. 3; AA sequence." evidence="8" ref="3">
    <original>V</original>
    <variation>G</variation>
    <location>
        <position position="19"/>
    </location>
</feature>
<feature type="sequence conflict" description="In Ref. 2; AA sequence." evidence="8" ref="2">
    <original>N</original>
    <variation>D</variation>
    <location>
        <position position="130"/>
    </location>
</feature>
<feature type="helix" evidence="11">
    <location>
        <begin position="18"/>
        <end position="28"/>
    </location>
</feature>
<feature type="helix" evidence="11">
    <location>
        <begin position="33"/>
        <end position="36"/>
    </location>
</feature>
<feature type="turn" evidence="11">
    <location>
        <begin position="37"/>
        <end position="39"/>
    </location>
</feature>
<feature type="turn" evidence="11">
    <location>
        <begin position="41"/>
        <end position="43"/>
    </location>
</feature>
<feature type="strand" evidence="11">
    <location>
        <begin position="44"/>
        <end position="46"/>
    </location>
</feature>
<feature type="strand" evidence="11">
    <location>
        <begin position="48"/>
        <end position="50"/>
    </location>
</feature>
<feature type="helix" evidence="11">
    <location>
        <begin position="55"/>
        <end position="67"/>
    </location>
</feature>
<feature type="turn" evidence="11">
    <location>
        <begin position="75"/>
        <end position="77"/>
    </location>
</feature>
<feature type="strand" evidence="11">
    <location>
        <begin position="81"/>
        <end position="84"/>
    </location>
</feature>
<feature type="strand" evidence="11">
    <location>
        <begin position="89"/>
        <end position="92"/>
    </location>
</feature>
<feature type="helix" evidence="11">
    <location>
        <begin position="96"/>
        <end position="113"/>
    </location>
</feature>
<feature type="helix" evidence="11">
    <location>
        <begin position="121"/>
        <end position="123"/>
    </location>
</feature>
<feature type="helix" evidence="11">
    <location>
        <begin position="128"/>
        <end position="130"/>
    </location>
</feature>
<protein>
    <recommendedName>
        <fullName>Acidic phospholipase A2</fullName>
        <shortName>svPLA2</shortName>
        <ecNumber>3.1.1.4</ecNumber>
    </recommendedName>
    <alternativeName>
        <fullName>Phosphatidylcholine 2-acylhydrolase</fullName>
    </alternativeName>
</protein>
<keyword id="KW-0002">3D-structure</keyword>
<keyword id="KW-0106">Calcium</keyword>
<keyword id="KW-0903">Direct protein sequencing</keyword>
<keyword id="KW-1015">Disulfide bond</keyword>
<keyword id="KW-0378">Hydrolase</keyword>
<keyword id="KW-0442">Lipid degradation</keyword>
<keyword id="KW-0443">Lipid metabolism</keyword>
<keyword id="KW-0479">Metal-binding</keyword>
<keyword id="KW-0964">Secreted</keyword>
<keyword id="KW-0732">Signal</keyword>
<keyword id="KW-0800">Toxin</keyword>
<name>PA2A_CROAT</name>
<accession>P00624</accession>
<accession>Q8UVZ6</accession>
<reference key="1">
    <citation type="submission" date="2000-05" db="EMBL/GenBank/DDBJ databases">
        <authorList>
            <person name="Tsai I.-H."/>
            <person name="Chen Y.-H."/>
            <person name="Wang Y.-M."/>
            <person name="Tu A.T."/>
        </authorList>
    </citation>
    <scope>NUCLEOTIDE SEQUENCE [MRNA]</scope>
    <source>
        <tissue>Venom gland</tissue>
    </source>
</reference>
<reference key="2">
    <citation type="journal article" date="1982" name="J. Biol. Chem.">
        <title>Crotalus atrox phospholipase A2. Amino acid sequence and studies on the function of the NH2-terminal region.</title>
        <authorList>
            <person name="Randolph A."/>
            <person name="Heinrikson R.L."/>
        </authorList>
    </citation>
    <scope>PROTEIN SEQUENCE OF 17-138</scope>
    <source>
        <tissue>Venom</tissue>
    </source>
</reference>
<reference key="3">
    <citation type="journal article" date="2009" name="J. Proteome Res.">
        <title>Exploring the venom proteome of the western diamondback rattlesnake, Crotalus atrox, via snake venomics and combinatorial peptide ligand library approaches.</title>
        <authorList>
            <person name="Calvete J.J."/>
            <person name="Fasoli E."/>
            <person name="Sanz L."/>
            <person name="Boschetti E."/>
            <person name="Righetti P.G."/>
        </authorList>
    </citation>
    <scope>PROTEIN SEQUENCE OF 17-31; 38-69 AND 107-129</scope>
    <scope>MASS SPECTROMETRY</scope>
    <source>
        <tissue>Venom</tissue>
    </source>
</reference>
<reference key="4">
    <citation type="journal article" date="1981" name="J. Biol. Chem.">
        <title>The 2.5 A crystal structure of a dimeric phospholipase A2 from the venom of Crotalus atrox.</title>
        <authorList>
            <person name="Keith C."/>
            <person name="Feldman D.S."/>
            <person name="Deganello S."/>
            <person name="Glick J."/>
            <person name="Ward K.B."/>
            <person name="Jones E.O."/>
            <person name="Sigler P.B."/>
        </authorList>
    </citation>
    <scope>X-RAY CRYSTALLOGRAPHY (2.5 ANGSTROMS)</scope>
    <source>
        <tissue>Venom</tissue>
    </source>
</reference>
<reference key="5">
    <citation type="journal article" date="1985" name="J. Biol. Chem.">
        <title>The refined crystal structure of dimeric phospholipase A2 at 2.5 A. Access to a shielded catalytic center.</title>
        <authorList>
            <person name="Brunie S."/>
            <person name="Bolin J."/>
            <person name="Gewirth D."/>
            <person name="Sigler P.B."/>
        </authorList>
    </citation>
    <scope>X-RAY CRYSTALLOGRAPHY (2.5 ANGSTROMS) OF 17-138</scope>
    <scope>SUBUNIT</scope>
    <scope>DISULFIDE BONDS</scope>
</reference>